<reference key="1">
    <citation type="submission" date="2007-03" db="EMBL/GenBank/DDBJ databases">
        <authorList>
            <person name="Heidelberg J."/>
        </authorList>
    </citation>
    <scope>NUCLEOTIDE SEQUENCE [LARGE SCALE GENOMIC DNA]</scope>
    <source>
        <strain>ATCC 39541 / Classical Ogawa 395 / O395</strain>
    </source>
</reference>
<reference key="2">
    <citation type="journal article" date="2008" name="PLoS ONE">
        <title>A recalibrated molecular clock and independent origins for the cholera pandemic clones.</title>
        <authorList>
            <person name="Feng L."/>
            <person name="Reeves P.R."/>
            <person name="Lan R."/>
            <person name="Ren Y."/>
            <person name="Gao C."/>
            <person name="Zhou Z."/>
            <person name="Ren Y."/>
            <person name="Cheng J."/>
            <person name="Wang W."/>
            <person name="Wang J."/>
            <person name="Qian W."/>
            <person name="Li D."/>
            <person name="Wang L."/>
        </authorList>
    </citation>
    <scope>NUCLEOTIDE SEQUENCE [LARGE SCALE GENOMIC DNA]</scope>
    <source>
        <strain>ATCC 39541 / Classical Ogawa 395 / O395</strain>
    </source>
</reference>
<gene>
    <name type="primary">acyP</name>
    <name type="ordered locus">VC0395_A0969</name>
    <name type="ordered locus">VC395_1474</name>
</gene>
<protein>
    <recommendedName>
        <fullName>Acylphosphatase</fullName>
        <ecNumber>3.6.1.7</ecNumber>
    </recommendedName>
    <alternativeName>
        <fullName>Acylphosphate phosphohydrolase</fullName>
    </alternativeName>
</protein>
<dbReference type="EC" id="3.6.1.7"/>
<dbReference type="EMBL" id="CP000627">
    <property type="protein sequence ID" value="ABQ21959.1"/>
    <property type="status" value="ALT_INIT"/>
    <property type="molecule type" value="Genomic_DNA"/>
</dbReference>
<dbReference type="EMBL" id="CP001235">
    <property type="protein sequence ID" value="ACP09482.1"/>
    <property type="status" value="ALT_INIT"/>
    <property type="molecule type" value="Genomic_DNA"/>
</dbReference>
<dbReference type="PDB" id="4HI1">
    <property type="method" value="X-ray"/>
    <property type="resolution" value="1.96 A"/>
    <property type="chains" value="A/B/C=1-91"/>
</dbReference>
<dbReference type="PDB" id="4HI2">
    <property type="method" value="X-ray"/>
    <property type="resolution" value="3.10 A"/>
    <property type="chains" value="A/B/C/D/E/F/G/H/I/J/K/L=1-91"/>
</dbReference>
<dbReference type="PDB" id="6KRB">
    <property type="method" value="X-ray"/>
    <property type="resolution" value="2.38 A"/>
    <property type="chains" value="A/B/C/D/E/F/G/H/I/J/K/L=1-91"/>
</dbReference>
<dbReference type="PDBsum" id="4HI1"/>
<dbReference type="PDBsum" id="4HI2"/>
<dbReference type="PDBsum" id="6KRB"/>
<dbReference type="SMR" id="A5F8G9"/>
<dbReference type="KEGG" id="vco:VC0395_A0969"/>
<dbReference type="KEGG" id="vcr:VC395_1474"/>
<dbReference type="PATRIC" id="fig|345073.21.peg.1428"/>
<dbReference type="eggNOG" id="COG1254">
    <property type="taxonomic scope" value="Bacteria"/>
</dbReference>
<dbReference type="HOGENOM" id="CLU_141932_1_2_6"/>
<dbReference type="BRENDA" id="3.6.1.7">
    <property type="organism ID" value="6626"/>
</dbReference>
<dbReference type="EvolutionaryTrace" id="A5F8G9"/>
<dbReference type="Proteomes" id="UP000000249">
    <property type="component" value="Chromosome 2"/>
</dbReference>
<dbReference type="GO" id="GO:0003998">
    <property type="term" value="F:acylphosphatase activity"/>
    <property type="evidence" value="ECO:0007669"/>
    <property type="project" value="UniProtKB-EC"/>
</dbReference>
<dbReference type="FunFam" id="3.30.70.100:FF:000012">
    <property type="entry name" value="Acylphosphatase"/>
    <property type="match status" value="1"/>
</dbReference>
<dbReference type="Gene3D" id="3.30.70.100">
    <property type="match status" value="1"/>
</dbReference>
<dbReference type="InterPro" id="IPR020456">
    <property type="entry name" value="Acylphosphatase"/>
</dbReference>
<dbReference type="InterPro" id="IPR001792">
    <property type="entry name" value="Acylphosphatase-like_dom"/>
</dbReference>
<dbReference type="InterPro" id="IPR036046">
    <property type="entry name" value="Acylphosphatase-like_dom_sf"/>
</dbReference>
<dbReference type="InterPro" id="IPR017968">
    <property type="entry name" value="Acylphosphatase_CS"/>
</dbReference>
<dbReference type="NCBIfam" id="NF011000">
    <property type="entry name" value="PRK14426.1"/>
    <property type="match status" value="1"/>
</dbReference>
<dbReference type="PANTHER" id="PTHR47268">
    <property type="entry name" value="ACYLPHOSPHATASE"/>
    <property type="match status" value="1"/>
</dbReference>
<dbReference type="PANTHER" id="PTHR47268:SF4">
    <property type="entry name" value="ACYLPHOSPHATASE"/>
    <property type="match status" value="1"/>
</dbReference>
<dbReference type="Pfam" id="PF00708">
    <property type="entry name" value="Acylphosphatase"/>
    <property type="match status" value="1"/>
</dbReference>
<dbReference type="SUPFAM" id="SSF54975">
    <property type="entry name" value="Acylphosphatase/BLUF domain-like"/>
    <property type="match status" value="1"/>
</dbReference>
<dbReference type="PROSITE" id="PS00151">
    <property type="entry name" value="ACYLPHOSPHATASE_2"/>
    <property type="match status" value="1"/>
</dbReference>
<dbReference type="PROSITE" id="PS51160">
    <property type="entry name" value="ACYLPHOSPHATASE_3"/>
    <property type="match status" value="1"/>
</dbReference>
<evidence type="ECO:0000255" key="1">
    <source>
        <dbReference type="PROSITE-ProRule" id="PRU00520"/>
    </source>
</evidence>
<evidence type="ECO:0000305" key="2"/>
<evidence type="ECO:0007829" key="3">
    <source>
        <dbReference type="PDB" id="4HI1"/>
    </source>
</evidence>
<proteinExistence type="evidence at protein level"/>
<keyword id="KW-0002">3D-structure</keyword>
<keyword id="KW-0378">Hydrolase</keyword>
<name>ACYP_VIBC3</name>
<accession>A5F8G9</accession>
<accession>C3M0B6</accession>
<organism>
    <name type="scientific">Vibrio cholerae serotype O1 (strain ATCC 39541 / Classical Ogawa 395 / O395)</name>
    <dbReference type="NCBI Taxonomy" id="345073"/>
    <lineage>
        <taxon>Bacteria</taxon>
        <taxon>Pseudomonadati</taxon>
        <taxon>Pseudomonadota</taxon>
        <taxon>Gammaproteobacteria</taxon>
        <taxon>Vibrionales</taxon>
        <taxon>Vibrionaceae</taxon>
        <taxon>Vibrio</taxon>
    </lineage>
</organism>
<sequence>MEKQCSKFIVSGHVQGVGFCYHTSHQGLKLGLTGYAKNLNNGDVEVVACGTPERLEELYLWLQEGPKTASVRQVRRLSSELEHDYQGFEIL</sequence>
<comment type="catalytic activity">
    <reaction>
        <text>an acyl phosphate + H2O = a carboxylate + phosphate + H(+)</text>
        <dbReference type="Rhea" id="RHEA:14965"/>
        <dbReference type="ChEBI" id="CHEBI:15377"/>
        <dbReference type="ChEBI" id="CHEBI:15378"/>
        <dbReference type="ChEBI" id="CHEBI:29067"/>
        <dbReference type="ChEBI" id="CHEBI:43474"/>
        <dbReference type="ChEBI" id="CHEBI:59918"/>
        <dbReference type="EC" id="3.6.1.7"/>
    </reaction>
</comment>
<comment type="similarity">
    <text evidence="2">Belongs to the acylphosphatase family.</text>
</comment>
<comment type="caution">
    <text evidence="2">Lacks the conserved active site Arg in position 20. There is a cysteine in this position.</text>
</comment>
<comment type="sequence caution" evidence="2">
    <conflict type="erroneous initiation">
        <sequence resource="EMBL-CDS" id="ABQ21959"/>
    </conflict>
</comment>
<comment type="sequence caution" evidence="2">
    <conflict type="erroneous initiation">
        <sequence resource="EMBL-CDS" id="ACP09482"/>
    </conflict>
</comment>
<feature type="chain" id="PRO_0000326840" description="Acylphosphatase">
    <location>
        <begin position="1"/>
        <end position="91"/>
    </location>
</feature>
<feature type="domain" description="Acylphosphatase-like" evidence="1">
    <location>
        <begin position="5"/>
        <end position="91"/>
    </location>
</feature>
<feature type="active site" evidence="1">
    <location>
        <position position="38"/>
    </location>
</feature>
<feature type="strand" evidence="3">
    <location>
        <begin position="5"/>
        <end position="13"/>
    </location>
</feature>
<feature type="strand" evidence="3">
    <location>
        <begin position="15"/>
        <end position="18"/>
    </location>
</feature>
<feature type="helix" evidence="3">
    <location>
        <begin position="19"/>
        <end position="29"/>
    </location>
</feature>
<feature type="strand" evidence="3">
    <location>
        <begin position="33"/>
        <end position="38"/>
    </location>
</feature>
<feature type="strand" evidence="3">
    <location>
        <begin position="44"/>
        <end position="50"/>
    </location>
</feature>
<feature type="helix" evidence="3">
    <location>
        <begin position="52"/>
        <end position="64"/>
    </location>
</feature>
<feature type="strand" evidence="3">
    <location>
        <begin position="68"/>
        <end position="76"/>
    </location>
</feature>
<feature type="strand" evidence="3">
    <location>
        <begin position="86"/>
        <end position="90"/>
    </location>
</feature>